<accession>O31776</accession>
<feature type="chain" id="PRO_0000160831" description="L-threonine 3-dehydrogenase">
    <location>
        <begin position="1"/>
        <end position="347"/>
    </location>
</feature>
<feature type="active site" description="Charge relay system" evidence="1">
    <location>
        <position position="45"/>
    </location>
</feature>
<feature type="active site" description="Charge relay system" evidence="1">
    <location>
        <position position="48"/>
    </location>
</feature>
<feature type="binding site" evidence="1">
    <location>
        <position position="43"/>
    </location>
    <ligand>
        <name>Zn(2+)</name>
        <dbReference type="ChEBI" id="CHEBI:29105"/>
        <label>1</label>
        <note>catalytic</note>
    </ligand>
</feature>
<feature type="binding site" evidence="1">
    <location>
        <position position="68"/>
    </location>
    <ligand>
        <name>Zn(2+)</name>
        <dbReference type="ChEBI" id="CHEBI:29105"/>
        <label>1</label>
        <note>catalytic</note>
    </ligand>
</feature>
<feature type="binding site" evidence="1">
    <location>
        <position position="69"/>
    </location>
    <ligand>
        <name>Zn(2+)</name>
        <dbReference type="ChEBI" id="CHEBI:29105"/>
        <label>1</label>
        <note>catalytic</note>
    </ligand>
</feature>
<feature type="binding site" evidence="1">
    <location>
        <position position="98"/>
    </location>
    <ligand>
        <name>Zn(2+)</name>
        <dbReference type="ChEBI" id="CHEBI:29105"/>
        <label>2</label>
    </ligand>
</feature>
<feature type="binding site" evidence="1">
    <location>
        <position position="101"/>
    </location>
    <ligand>
        <name>Zn(2+)</name>
        <dbReference type="ChEBI" id="CHEBI:29105"/>
        <label>2</label>
    </ligand>
</feature>
<feature type="binding site" evidence="1">
    <location>
        <position position="104"/>
    </location>
    <ligand>
        <name>Zn(2+)</name>
        <dbReference type="ChEBI" id="CHEBI:29105"/>
        <label>2</label>
    </ligand>
</feature>
<feature type="binding site" evidence="1">
    <location>
        <position position="112"/>
    </location>
    <ligand>
        <name>Zn(2+)</name>
        <dbReference type="ChEBI" id="CHEBI:29105"/>
        <label>2</label>
    </ligand>
</feature>
<feature type="binding site" evidence="1">
    <location>
        <position position="180"/>
    </location>
    <ligand>
        <name>NAD(+)</name>
        <dbReference type="ChEBI" id="CHEBI:57540"/>
    </ligand>
</feature>
<feature type="binding site" evidence="1">
    <location>
        <position position="200"/>
    </location>
    <ligand>
        <name>NAD(+)</name>
        <dbReference type="ChEBI" id="CHEBI:57540"/>
    </ligand>
</feature>
<feature type="binding site" evidence="1">
    <location>
        <position position="205"/>
    </location>
    <ligand>
        <name>NAD(+)</name>
        <dbReference type="ChEBI" id="CHEBI:57540"/>
    </ligand>
</feature>
<feature type="binding site" evidence="1">
    <location>
        <begin position="267"/>
        <end position="269"/>
    </location>
    <ligand>
        <name>NAD(+)</name>
        <dbReference type="ChEBI" id="CHEBI:57540"/>
    </ligand>
</feature>
<feature type="binding site" evidence="1">
    <location>
        <begin position="292"/>
        <end position="293"/>
    </location>
    <ligand>
        <name>NAD(+)</name>
        <dbReference type="ChEBI" id="CHEBI:57540"/>
    </ligand>
</feature>
<feature type="site" description="Important for catalytic activity for the proton relay mechanism but does not participate directly in the coordination of zinc atom" evidence="1">
    <location>
        <position position="153"/>
    </location>
</feature>
<proteinExistence type="inferred from homology"/>
<evidence type="ECO:0000255" key="1">
    <source>
        <dbReference type="HAMAP-Rule" id="MF_00627"/>
    </source>
</evidence>
<dbReference type="EC" id="1.1.1.103" evidence="1"/>
<dbReference type="EMBL" id="AL009126">
    <property type="protein sequence ID" value="CAB13572.1"/>
    <property type="molecule type" value="Genomic_DNA"/>
</dbReference>
<dbReference type="PIR" id="C69721">
    <property type="entry name" value="C69721"/>
</dbReference>
<dbReference type="RefSeq" id="NP_389581.1">
    <property type="nucleotide sequence ID" value="NC_000964.3"/>
</dbReference>
<dbReference type="RefSeq" id="WP_003244880.1">
    <property type="nucleotide sequence ID" value="NZ_OZ025638.1"/>
</dbReference>
<dbReference type="SMR" id="O31776"/>
<dbReference type="FunCoup" id="O31776">
    <property type="interactions" value="79"/>
</dbReference>
<dbReference type="STRING" id="224308.BSU16990"/>
<dbReference type="jPOST" id="O31776"/>
<dbReference type="PaxDb" id="224308-BSU16990"/>
<dbReference type="EnsemblBacteria" id="CAB13572">
    <property type="protein sequence ID" value="CAB13572"/>
    <property type="gene ID" value="BSU_16990"/>
</dbReference>
<dbReference type="GeneID" id="939462"/>
<dbReference type="KEGG" id="bsu:BSU16990"/>
<dbReference type="PATRIC" id="fig|224308.179.peg.1840"/>
<dbReference type="eggNOG" id="COG1063">
    <property type="taxonomic scope" value="Bacteria"/>
</dbReference>
<dbReference type="InParanoid" id="O31776"/>
<dbReference type="OrthoDB" id="9770238at2"/>
<dbReference type="PhylomeDB" id="O31776"/>
<dbReference type="BioCyc" id="BSUB:BSU16990-MONOMER"/>
<dbReference type="UniPathway" id="UPA00046">
    <property type="reaction ID" value="UER00505"/>
</dbReference>
<dbReference type="Proteomes" id="UP000001570">
    <property type="component" value="Chromosome"/>
</dbReference>
<dbReference type="GO" id="GO:0005737">
    <property type="term" value="C:cytoplasm"/>
    <property type="evidence" value="ECO:0007669"/>
    <property type="project" value="UniProtKB-SubCell"/>
</dbReference>
<dbReference type="GO" id="GO:0008743">
    <property type="term" value="F:L-threonine 3-dehydrogenase activity"/>
    <property type="evidence" value="ECO:0007669"/>
    <property type="project" value="UniProtKB-UniRule"/>
</dbReference>
<dbReference type="GO" id="GO:0008270">
    <property type="term" value="F:zinc ion binding"/>
    <property type="evidence" value="ECO:0007669"/>
    <property type="project" value="UniProtKB-UniRule"/>
</dbReference>
<dbReference type="GO" id="GO:0019518">
    <property type="term" value="P:L-threonine catabolic process to glycine"/>
    <property type="evidence" value="ECO:0007669"/>
    <property type="project" value="UniProtKB-UniPathway"/>
</dbReference>
<dbReference type="CDD" id="cd05281">
    <property type="entry name" value="TDH"/>
    <property type="match status" value="1"/>
</dbReference>
<dbReference type="Gene3D" id="3.90.180.10">
    <property type="entry name" value="Medium-chain alcohol dehydrogenases, catalytic domain"/>
    <property type="match status" value="1"/>
</dbReference>
<dbReference type="Gene3D" id="3.40.50.720">
    <property type="entry name" value="NAD(P)-binding Rossmann-like Domain"/>
    <property type="match status" value="1"/>
</dbReference>
<dbReference type="HAMAP" id="MF_00627">
    <property type="entry name" value="Thr_dehydrog"/>
    <property type="match status" value="1"/>
</dbReference>
<dbReference type="InterPro" id="IPR013149">
    <property type="entry name" value="ADH-like_C"/>
</dbReference>
<dbReference type="InterPro" id="IPR013154">
    <property type="entry name" value="ADH-like_N"/>
</dbReference>
<dbReference type="InterPro" id="IPR002328">
    <property type="entry name" value="ADH_Zn_CS"/>
</dbReference>
<dbReference type="InterPro" id="IPR011032">
    <property type="entry name" value="GroES-like_sf"/>
</dbReference>
<dbReference type="InterPro" id="IPR004627">
    <property type="entry name" value="L-Threonine_3-DHase"/>
</dbReference>
<dbReference type="InterPro" id="IPR036291">
    <property type="entry name" value="NAD(P)-bd_dom_sf"/>
</dbReference>
<dbReference type="InterPro" id="IPR020843">
    <property type="entry name" value="PKS_ER"/>
</dbReference>
<dbReference type="InterPro" id="IPR050129">
    <property type="entry name" value="Zn_alcohol_dh"/>
</dbReference>
<dbReference type="NCBIfam" id="NF003808">
    <property type="entry name" value="PRK05396.1"/>
    <property type="match status" value="1"/>
</dbReference>
<dbReference type="NCBIfam" id="TIGR00692">
    <property type="entry name" value="tdh"/>
    <property type="match status" value="1"/>
</dbReference>
<dbReference type="PANTHER" id="PTHR43401">
    <property type="entry name" value="L-THREONINE 3-DEHYDROGENASE"/>
    <property type="match status" value="1"/>
</dbReference>
<dbReference type="PANTHER" id="PTHR43401:SF2">
    <property type="entry name" value="L-THREONINE 3-DEHYDROGENASE"/>
    <property type="match status" value="1"/>
</dbReference>
<dbReference type="Pfam" id="PF08240">
    <property type="entry name" value="ADH_N"/>
    <property type="match status" value="1"/>
</dbReference>
<dbReference type="Pfam" id="PF00107">
    <property type="entry name" value="ADH_zinc_N"/>
    <property type="match status" value="1"/>
</dbReference>
<dbReference type="SMART" id="SM00829">
    <property type="entry name" value="PKS_ER"/>
    <property type="match status" value="1"/>
</dbReference>
<dbReference type="SUPFAM" id="SSF50129">
    <property type="entry name" value="GroES-like"/>
    <property type="match status" value="1"/>
</dbReference>
<dbReference type="SUPFAM" id="SSF51735">
    <property type="entry name" value="NAD(P)-binding Rossmann-fold domains"/>
    <property type="match status" value="1"/>
</dbReference>
<dbReference type="PROSITE" id="PS00059">
    <property type="entry name" value="ADH_ZINC"/>
    <property type="match status" value="1"/>
</dbReference>
<sequence length="347" mass="36997">MQSGKMKALMKKDGAFGAVLTEVPIPEIDKHEVLIKVKAASICGTDVHIYNWDQWARQRIKTPYVFGHEFSGIVEGVGENVSSVKVGEYVSAETHIVCGECVPCLTGKSHVCTNTAIIGVDTAGCFAEYVKVPADNIWRNPADMDPSIASIQEPLGNAVHTVLESQPAGGTTAVIGCGPIGLMAVAVAKAAGASQVIAIDKNEYRLRLAKQMGATCTVSIEKEDPLKIVSALTSGEGADLVCEMSGHPSAIAQGLAMAANGGRFHILSLPEHPVTIDLTNKVVFKGLTIQGITGRKMFSTWRQVSQLISSNMIDLAPVITHQFPLEEFEKGFELMRSGQCGKVILIP</sequence>
<organism>
    <name type="scientific">Bacillus subtilis (strain 168)</name>
    <dbReference type="NCBI Taxonomy" id="224308"/>
    <lineage>
        <taxon>Bacteria</taxon>
        <taxon>Bacillati</taxon>
        <taxon>Bacillota</taxon>
        <taxon>Bacilli</taxon>
        <taxon>Bacillales</taxon>
        <taxon>Bacillaceae</taxon>
        <taxon>Bacillus</taxon>
    </lineage>
</organism>
<comment type="function">
    <text evidence="1">Catalyzes the NAD(+)-dependent oxidation of L-threonine to 2-amino-3-ketobutyrate.</text>
</comment>
<comment type="catalytic activity">
    <reaction evidence="1">
        <text>L-threonine + NAD(+) = (2S)-2-amino-3-oxobutanoate + NADH + H(+)</text>
        <dbReference type="Rhea" id="RHEA:13161"/>
        <dbReference type="ChEBI" id="CHEBI:15378"/>
        <dbReference type="ChEBI" id="CHEBI:57540"/>
        <dbReference type="ChEBI" id="CHEBI:57926"/>
        <dbReference type="ChEBI" id="CHEBI:57945"/>
        <dbReference type="ChEBI" id="CHEBI:78948"/>
        <dbReference type="EC" id="1.1.1.103"/>
    </reaction>
</comment>
<comment type="cofactor">
    <cofactor evidence="1">
        <name>Zn(2+)</name>
        <dbReference type="ChEBI" id="CHEBI:29105"/>
    </cofactor>
    <text evidence="1">Binds 2 Zn(2+) ions per subunit.</text>
</comment>
<comment type="pathway">
    <text evidence="1">Amino-acid degradation; L-threonine degradation via oxydo-reductase pathway; glycine from L-threonine: step 1/2.</text>
</comment>
<comment type="subunit">
    <text evidence="1">Homotetramer.</text>
</comment>
<comment type="subcellular location">
    <subcellularLocation>
        <location evidence="1">Cytoplasm</location>
    </subcellularLocation>
</comment>
<comment type="similarity">
    <text evidence="1">Belongs to the zinc-containing alcohol dehydrogenase family.</text>
</comment>
<gene>
    <name evidence="1" type="primary">tdh</name>
    <name type="ordered locus">BSU16990</name>
</gene>
<reference key="1">
    <citation type="journal article" date="1997" name="Nature">
        <title>The complete genome sequence of the Gram-positive bacterium Bacillus subtilis.</title>
        <authorList>
            <person name="Kunst F."/>
            <person name="Ogasawara N."/>
            <person name="Moszer I."/>
            <person name="Albertini A.M."/>
            <person name="Alloni G."/>
            <person name="Azevedo V."/>
            <person name="Bertero M.G."/>
            <person name="Bessieres P."/>
            <person name="Bolotin A."/>
            <person name="Borchert S."/>
            <person name="Borriss R."/>
            <person name="Boursier L."/>
            <person name="Brans A."/>
            <person name="Braun M."/>
            <person name="Brignell S.C."/>
            <person name="Bron S."/>
            <person name="Brouillet S."/>
            <person name="Bruschi C.V."/>
            <person name="Caldwell B."/>
            <person name="Capuano V."/>
            <person name="Carter N.M."/>
            <person name="Choi S.-K."/>
            <person name="Codani J.-J."/>
            <person name="Connerton I.F."/>
            <person name="Cummings N.J."/>
            <person name="Daniel R.A."/>
            <person name="Denizot F."/>
            <person name="Devine K.M."/>
            <person name="Duesterhoeft A."/>
            <person name="Ehrlich S.D."/>
            <person name="Emmerson P.T."/>
            <person name="Entian K.-D."/>
            <person name="Errington J."/>
            <person name="Fabret C."/>
            <person name="Ferrari E."/>
            <person name="Foulger D."/>
            <person name="Fritz C."/>
            <person name="Fujita M."/>
            <person name="Fujita Y."/>
            <person name="Fuma S."/>
            <person name="Galizzi A."/>
            <person name="Galleron N."/>
            <person name="Ghim S.-Y."/>
            <person name="Glaser P."/>
            <person name="Goffeau A."/>
            <person name="Golightly E.J."/>
            <person name="Grandi G."/>
            <person name="Guiseppi G."/>
            <person name="Guy B.J."/>
            <person name="Haga K."/>
            <person name="Haiech J."/>
            <person name="Harwood C.R."/>
            <person name="Henaut A."/>
            <person name="Hilbert H."/>
            <person name="Holsappel S."/>
            <person name="Hosono S."/>
            <person name="Hullo M.-F."/>
            <person name="Itaya M."/>
            <person name="Jones L.-M."/>
            <person name="Joris B."/>
            <person name="Karamata D."/>
            <person name="Kasahara Y."/>
            <person name="Klaerr-Blanchard M."/>
            <person name="Klein C."/>
            <person name="Kobayashi Y."/>
            <person name="Koetter P."/>
            <person name="Koningstein G."/>
            <person name="Krogh S."/>
            <person name="Kumano M."/>
            <person name="Kurita K."/>
            <person name="Lapidus A."/>
            <person name="Lardinois S."/>
            <person name="Lauber J."/>
            <person name="Lazarevic V."/>
            <person name="Lee S.-M."/>
            <person name="Levine A."/>
            <person name="Liu H."/>
            <person name="Masuda S."/>
            <person name="Mauel C."/>
            <person name="Medigue C."/>
            <person name="Medina N."/>
            <person name="Mellado R.P."/>
            <person name="Mizuno M."/>
            <person name="Moestl D."/>
            <person name="Nakai S."/>
            <person name="Noback M."/>
            <person name="Noone D."/>
            <person name="O'Reilly M."/>
            <person name="Ogawa K."/>
            <person name="Ogiwara A."/>
            <person name="Oudega B."/>
            <person name="Park S.-H."/>
            <person name="Parro V."/>
            <person name="Pohl T.M."/>
            <person name="Portetelle D."/>
            <person name="Porwollik S."/>
            <person name="Prescott A.M."/>
            <person name="Presecan E."/>
            <person name="Pujic P."/>
            <person name="Purnelle B."/>
            <person name="Rapoport G."/>
            <person name="Rey M."/>
            <person name="Reynolds S."/>
            <person name="Rieger M."/>
            <person name="Rivolta C."/>
            <person name="Rocha E."/>
            <person name="Roche B."/>
            <person name="Rose M."/>
            <person name="Sadaie Y."/>
            <person name="Sato T."/>
            <person name="Scanlan E."/>
            <person name="Schleich S."/>
            <person name="Schroeter R."/>
            <person name="Scoffone F."/>
            <person name="Sekiguchi J."/>
            <person name="Sekowska A."/>
            <person name="Seror S.J."/>
            <person name="Serror P."/>
            <person name="Shin B.-S."/>
            <person name="Soldo B."/>
            <person name="Sorokin A."/>
            <person name="Tacconi E."/>
            <person name="Takagi T."/>
            <person name="Takahashi H."/>
            <person name="Takemaru K."/>
            <person name="Takeuchi M."/>
            <person name="Tamakoshi A."/>
            <person name="Tanaka T."/>
            <person name="Terpstra P."/>
            <person name="Tognoni A."/>
            <person name="Tosato V."/>
            <person name="Uchiyama S."/>
            <person name="Vandenbol M."/>
            <person name="Vannier F."/>
            <person name="Vassarotti A."/>
            <person name="Viari A."/>
            <person name="Wambutt R."/>
            <person name="Wedler E."/>
            <person name="Wedler H."/>
            <person name="Weitzenegger T."/>
            <person name="Winters P."/>
            <person name="Wipat A."/>
            <person name="Yamamoto H."/>
            <person name="Yamane K."/>
            <person name="Yasumoto K."/>
            <person name="Yata K."/>
            <person name="Yoshida K."/>
            <person name="Yoshikawa H.-F."/>
            <person name="Zumstein E."/>
            <person name="Yoshikawa H."/>
            <person name="Danchin A."/>
        </authorList>
    </citation>
    <scope>NUCLEOTIDE SEQUENCE [LARGE SCALE GENOMIC DNA]</scope>
    <source>
        <strain>168</strain>
    </source>
</reference>
<protein>
    <recommendedName>
        <fullName evidence="1">L-threonine 3-dehydrogenase</fullName>
        <shortName evidence="1">TDH</shortName>
        <ecNumber evidence="1">1.1.1.103</ecNumber>
    </recommendedName>
</protein>
<name>TDH_BACSU</name>
<keyword id="KW-0963">Cytoplasm</keyword>
<keyword id="KW-0479">Metal-binding</keyword>
<keyword id="KW-0520">NAD</keyword>
<keyword id="KW-0560">Oxidoreductase</keyword>
<keyword id="KW-1185">Reference proteome</keyword>
<keyword id="KW-0862">Zinc</keyword>